<organism>
    <name type="scientific">Psittacid herpesvirus 1 (isolate Amazon parrot/-/97-0001/1997)</name>
    <name type="common">PsHV-1</name>
    <name type="synonym">Pacheco's disease virus</name>
    <dbReference type="NCBI Taxonomy" id="670426"/>
    <lineage>
        <taxon>Viruses</taxon>
        <taxon>Duplodnaviria</taxon>
        <taxon>Heunggongvirae</taxon>
        <taxon>Peploviricota</taxon>
        <taxon>Herviviricetes</taxon>
        <taxon>Herpesvirales</taxon>
        <taxon>Orthoherpesviridae</taxon>
        <taxon>Alphaherpesvirinae</taxon>
        <taxon>Iltovirus</taxon>
        <taxon>Iltovirus psittacidalpha1</taxon>
        <taxon>Psittacid alphaherpesvirus 1</taxon>
    </lineage>
</organism>
<organismHost>
    <name type="scientific">Amazona oratrix</name>
    <name type="common">yellow-headed parrot</name>
    <dbReference type="NCBI Taxonomy" id="152276"/>
</organismHost>
<accession>Q6UDF7</accession>
<keyword id="KW-1185">Reference proteome</keyword>
<keyword id="KW-0732">Signal</keyword>
<feature type="signal peptide" evidence="1">
    <location>
        <begin position="1"/>
        <end position="17"/>
    </location>
</feature>
<feature type="chain" id="PRO_0000406836" description="Uncharacterized protein sORF2">
    <location>
        <begin position="18"/>
        <end position="991"/>
    </location>
</feature>
<feature type="region of interest" description="Disordered" evidence="2">
    <location>
        <begin position="332"/>
        <end position="352"/>
    </location>
</feature>
<feature type="region of interest" description="Disordered" evidence="2">
    <location>
        <begin position="392"/>
        <end position="425"/>
    </location>
</feature>
<feature type="region of interest" description="Disordered" evidence="2">
    <location>
        <begin position="469"/>
        <end position="511"/>
    </location>
</feature>
<feature type="region of interest" description="Disordered" evidence="2">
    <location>
        <begin position="542"/>
        <end position="569"/>
    </location>
</feature>
<feature type="region of interest" description="Disordered" evidence="2">
    <location>
        <begin position="587"/>
        <end position="641"/>
    </location>
</feature>
<feature type="region of interest" description="Disordered" evidence="2">
    <location>
        <begin position="658"/>
        <end position="734"/>
    </location>
</feature>
<feature type="compositionally biased region" description="Low complexity" evidence="2">
    <location>
        <begin position="400"/>
        <end position="413"/>
    </location>
</feature>
<feature type="compositionally biased region" description="Polar residues" evidence="2">
    <location>
        <begin position="414"/>
        <end position="425"/>
    </location>
</feature>
<feature type="compositionally biased region" description="Low complexity" evidence="2">
    <location>
        <begin position="472"/>
        <end position="493"/>
    </location>
</feature>
<feature type="compositionally biased region" description="Polar residues" evidence="2">
    <location>
        <begin position="542"/>
        <end position="554"/>
    </location>
</feature>
<feature type="compositionally biased region" description="Low complexity" evidence="2">
    <location>
        <begin position="556"/>
        <end position="569"/>
    </location>
</feature>
<feature type="compositionally biased region" description="Low complexity" evidence="2">
    <location>
        <begin position="598"/>
        <end position="615"/>
    </location>
</feature>
<feature type="compositionally biased region" description="Polar residues" evidence="2">
    <location>
        <begin position="617"/>
        <end position="628"/>
    </location>
</feature>
<feature type="compositionally biased region" description="Polar residues" evidence="2">
    <location>
        <begin position="658"/>
        <end position="667"/>
    </location>
</feature>
<feature type="compositionally biased region" description="Low complexity" evidence="2">
    <location>
        <begin position="668"/>
        <end position="682"/>
    </location>
</feature>
<feature type="compositionally biased region" description="Polar residues" evidence="2">
    <location>
        <begin position="686"/>
        <end position="710"/>
    </location>
</feature>
<evidence type="ECO:0000255" key="1"/>
<evidence type="ECO:0000256" key="2">
    <source>
        <dbReference type="SAM" id="MobiDB-lite"/>
    </source>
</evidence>
<gene>
    <name type="primary">sORF2</name>
</gene>
<reference key="1">
    <citation type="journal article" date="2006" name="J. Virol.">
        <title>Psittacid herpesvirus 1 and infectious laryngotracheitis virus: Comparative genome sequence analysis of two avian alphaherpesviruses.</title>
        <authorList>
            <person name="Thureen D.R."/>
            <person name="Keeler C.L. Jr."/>
        </authorList>
    </citation>
    <scope>NUCLEOTIDE SEQUENCE [LARGE SCALE GENOMIC DNA]</scope>
    <source>
        <strain>97-0001</strain>
    </source>
</reference>
<dbReference type="EMBL" id="AY372243">
    <property type="protein sequence ID" value="AAQ73753.1"/>
    <property type="molecule type" value="Genomic_DNA"/>
</dbReference>
<dbReference type="RefSeq" id="NP_944447.1">
    <property type="nucleotide sequence ID" value="NC_005264.1"/>
</dbReference>
<dbReference type="GeneID" id="4237765"/>
<dbReference type="KEGG" id="vg:4237765"/>
<dbReference type="Proteomes" id="UP000006840">
    <property type="component" value="Segment"/>
</dbReference>
<name>ORF2_PSHV1</name>
<protein>
    <recommendedName>
        <fullName>Uncharacterized protein sORF2</fullName>
    </recommendedName>
</protein>
<proteinExistence type="inferred from homology"/>
<sequence>MLWPAALVAMFALAARAREIDNVTCSVVYGSNVARISKDYWLAQEGSLVSFMTFENDDPVYFFMGRALGTGASGGKYLYRVTRDNNTNVSHVQTSLFIPEHFNGGILLDMGSNYTHDAETDPEFLNARYLVVNDTEDSVREETLGPCPEMLRTLDVSGRTTLLYPSRYLHARDRMQVEKTMDTAKCVSTSVNLDATVVFSVDFPFSERAILRVTQTFYPDDRPQKHLLYLASQGGKTVHYSEVSATVTPLPGGNASFNVTIEFTDQPDDTTIHLWVSPKGINDDPDAVSAYYILNSLSSYDDPYAHEEISCDSVYQNIVMVLGSVVNITSPDPLPRAPDYSYPTDDPAGETTESAVTWLEATAQTADEATTPLAAHATDGYEPTTAAATLSTTEDLTQETSTPTVTTVIDPTSGAVTTESRTTEGTAANVATTEAAGTEGQNQEATTAGGPTNAATTLGHQTIEAATVEDSTTTARAAEYPTPTTTTVEPRPAGGTTIEDPTDSPAIEDTTTPTTTAAKVTALKTAAAEGPTPCVTTYTGSDTEAAQSATSISDAVTPEDLTPETTTPVDWSVTSTYISVADGTSMPAPTPSAVAHEASTTPAPTATAVPTSHTPKPQESTSTPSRAPTTGVAPVTANSLSPAATSSERIVILNTATASSGPGASTGATTAPISPPWSASPAGDGVTTSAARTLEPSSTRKAVAAESTTAADDVATSELGSGDYGDHATEPPRIVITNPPGITTLHDADAAEEDPWPTRPLYSVNIVNATLTANGMLTATCMAAAKAKHAITFTWHVGSNMVPAITGPPEPGLMFNGNRAWSSRLQTVEYGISPSARLACMACTVPPAQRYCAHDVAVVARHDRLELDMQVDVATVSVVCSGLDGVESEPYFVWTANGRPVPLGSVRTKRIPNDYGTPARWQSAIHISRFFVPAGHRDVYECTATLASGETIKATKNWSNTDYLALQKNAAARSTFVVAGGITAFAVAELL</sequence>